<comment type="function">
    <text evidence="1">One of the primary rRNA binding proteins. Required for association of the 30S and 50S subunits to form the 70S ribosome, for tRNA binding and peptide bond formation. It has been suggested to have peptidyltransferase activity; this is somewhat controversial. Makes several contacts with the 16S rRNA in the 70S ribosome.</text>
</comment>
<comment type="subunit">
    <text evidence="1">Part of the 50S ribosomal subunit. Forms a bridge to the 30S subunit in the 70S ribosome.</text>
</comment>
<comment type="similarity">
    <text evidence="1">Belongs to the universal ribosomal protein uL2 family.</text>
</comment>
<gene>
    <name evidence="1" type="primary">rplB</name>
    <name type="ordered locus">BCG9842_B5192</name>
</gene>
<keyword id="KW-0687">Ribonucleoprotein</keyword>
<keyword id="KW-0689">Ribosomal protein</keyword>
<keyword id="KW-0694">RNA-binding</keyword>
<keyword id="KW-0699">rRNA-binding</keyword>
<protein>
    <recommendedName>
        <fullName evidence="1">Large ribosomal subunit protein uL2</fullName>
    </recommendedName>
    <alternativeName>
        <fullName evidence="3">50S ribosomal protein L2</fullName>
    </alternativeName>
</protein>
<proteinExistence type="inferred from homology"/>
<sequence>MGIKKYNPTTNGRRNMTTNDFAEITTDRPEKSLLAPLSKKAGRNNQGKITVRHQGGGHKRQYRIIDFKRNKDGIPGRVATIEYDPNRSANIALINYVDGEKRYILAPKSLEVGMEVMSGPEADIKIGNALPLINIPVGTVVHNIELKPGRGGQLVRSAGTSAQVLGKEGKYVLVRLTSGEVRLVLSACRASIGQVGNEQHELIKIGKAGRSRWLGKRPTVRGSVMNPVDHPHGGGEGRSPIGRKSPMSPWGKPTLGFKTRKKNKASDKFIVRRRKK</sequence>
<evidence type="ECO:0000255" key="1">
    <source>
        <dbReference type="HAMAP-Rule" id="MF_01320"/>
    </source>
</evidence>
<evidence type="ECO:0000256" key="2">
    <source>
        <dbReference type="SAM" id="MobiDB-lite"/>
    </source>
</evidence>
<evidence type="ECO:0000305" key="3"/>
<dbReference type="EMBL" id="CP001186">
    <property type="protein sequence ID" value="ACK96873.1"/>
    <property type="molecule type" value="Genomic_DNA"/>
</dbReference>
<dbReference type="RefSeq" id="WP_000511583.1">
    <property type="nucleotide sequence ID" value="NC_011772.1"/>
</dbReference>
<dbReference type="SMR" id="B7IT22"/>
<dbReference type="GeneID" id="72446931"/>
<dbReference type="KEGG" id="bcg:BCG9842_B5192"/>
<dbReference type="HOGENOM" id="CLU_036235_2_1_9"/>
<dbReference type="Proteomes" id="UP000006744">
    <property type="component" value="Chromosome"/>
</dbReference>
<dbReference type="GO" id="GO:0015934">
    <property type="term" value="C:large ribosomal subunit"/>
    <property type="evidence" value="ECO:0007669"/>
    <property type="project" value="InterPro"/>
</dbReference>
<dbReference type="GO" id="GO:0019843">
    <property type="term" value="F:rRNA binding"/>
    <property type="evidence" value="ECO:0007669"/>
    <property type="project" value="UniProtKB-UniRule"/>
</dbReference>
<dbReference type="GO" id="GO:0003735">
    <property type="term" value="F:structural constituent of ribosome"/>
    <property type="evidence" value="ECO:0007669"/>
    <property type="project" value="InterPro"/>
</dbReference>
<dbReference type="GO" id="GO:0016740">
    <property type="term" value="F:transferase activity"/>
    <property type="evidence" value="ECO:0007669"/>
    <property type="project" value="InterPro"/>
</dbReference>
<dbReference type="GO" id="GO:0002181">
    <property type="term" value="P:cytoplasmic translation"/>
    <property type="evidence" value="ECO:0007669"/>
    <property type="project" value="TreeGrafter"/>
</dbReference>
<dbReference type="FunFam" id="2.30.30.30:FF:000001">
    <property type="entry name" value="50S ribosomal protein L2"/>
    <property type="match status" value="1"/>
</dbReference>
<dbReference type="FunFam" id="2.40.50.140:FF:000003">
    <property type="entry name" value="50S ribosomal protein L2"/>
    <property type="match status" value="1"/>
</dbReference>
<dbReference type="FunFam" id="4.10.950.10:FF:000001">
    <property type="entry name" value="50S ribosomal protein L2"/>
    <property type="match status" value="1"/>
</dbReference>
<dbReference type="Gene3D" id="2.30.30.30">
    <property type="match status" value="1"/>
</dbReference>
<dbReference type="Gene3D" id="2.40.50.140">
    <property type="entry name" value="Nucleic acid-binding proteins"/>
    <property type="match status" value="1"/>
</dbReference>
<dbReference type="Gene3D" id="4.10.950.10">
    <property type="entry name" value="Ribosomal protein L2, domain 3"/>
    <property type="match status" value="1"/>
</dbReference>
<dbReference type="HAMAP" id="MF_01320_B">
    <property type="entry name" value="Ribosomal_uL2_B"/>
    <property type="match status" value="1"/>
</dbReference>
<dbReference type="InterPro" id="IPR012340">
    <property type="entry name" value="NA-bd_OB-fold"/>
</dbReference>
<dbReference type="InterPro" id="IPR014722">
    <property type="entry name" value="Rib_uL2_dom2"/>
</dbReference>
<dbReference type="InterPro" id="IPR002171">
    <property type="entry name" value="Ribosomal_uL2"/>
</dbReference>
<dbReference type="InterPro" id="IPR005880">
    <property type="entry name" value="Ribosomal_uL2_bac/org-type"/>
</dbReference>
<dbReference type="InterPro" id="IPR022669">
    <property type="entry name" value="Ribosomal_uL2_C"/>
</dbReference>
<dbReference type="InterPro" id="IPR022671">
    <property type="entry name" value="Ribosomal_uL2_CS"/>
</dbReference>
<dbReference type="InterPro" id="IPR014726">
    <property type="entry name" value="Ribosomal_uL2_dom3"/>
</dbReference>
<dbReference type="InterPro" id="IPR022666">
    <property type="entry name" value="Ribosomal_uL2_RNA-bd_dom"/>
</dbReference>
<dbReference type="InterPro" id="IPR008991">
    <property type="entry name" value="Translation_prot_SH3-like_sf"/>
</dbReference>
<dbReference type="NCBIfam" id="TIGR01171">
    <property type="entry name" value="rplB_bact"/>
    <property type="match status" value="1"/>
</dbReference>
<dbReference type="PANTHER" id="PTHR13691:SF5">
    <property type="entry name" value="LARGE RIBOSOMAL SUBUNIT PROTEIN UL2M"/>
    <property type="match status" value="1"/>
</dbReference>
<dbReference type="PANTHER" id="PTHR13691">
    <property type="entry name" value="RIBOSOMAL PROTEIN L2"/>
    <property type="match status" value="1"/>
</dbReference>
<dbReference type="Pfam" id="PF00181">
    <property type="entry name" value="Ribosomal_L2"/>
    <property type="match status" value="1"/>
</dbReference>
<dbReference type="Pfam" id="PF03947">
    <property type="entry name" value="Ribosomal_L2_C"/>
    <property type="match status" value="1"/>
</dbReference>
<dbReference type="PIRSF" id="PIRSF002158">
    <property type="entry name" value="Ribosomal_L2"/>
    <property type="match status" value="1"/>
</dbReference>
<dbReference type="SMART" id="SM01383">
    <property type="entry name" value="Ribosomal_L2"/>
    <property type="match status" value="1"/>
</dbReference>
<dbReference type="SMART" id="SM01382">
    <property type="entry name" value="Ribosomal_L2_C"/>
    <property type="match status" value="1"/>
</dbReference>
<dbReference type="SUPFAM" id="SSF50249">
    <property type="entry name" value="Nucleic acid-binding proteins"/>
    <property type="match status" value="1"/>
</dbReference>
<dbReference type="SUPFAM" id="SSF50104">
    <property type="entry name" value="Translation proteins SH3-like domain"/>
    <property type="match status" value="1"/>
</dbReference>
<dbReference type="PROSITE" id="PS00467">
    <property type="entry name" value="RIBOSOMAL_L2"/>
    <property type="match status" value="1"/>
</dbReference>
<accession>B7IT22</accession>
<organism>
    <name type="scientific">Bacillus cereus (strain G9842)</name>
    <dbReference type="NCBI Taxonomy" id="405531"/>
    <lineage>
        <taxon>Bacteria</taxon>
        <taxon>Bacillati</taxon>
        <taxon>Bacillota</taxon>
        <taxon>Bacilli</taxon>
        <taxon>Bacillales</taxon>
        <taxon>Bacillaceae</taxon>
        <taxon>Bacillus</taxon>
        <taxon>Bacillus cereus group</taxon>
    </lineage>
</organism>
<reference key="1">
    <citation type="submission" date="2008-10" db="EMBL/GenBank/DDBJ databases">
        <title>Genome sequence of Bacillus cereus G9842.</title>
        <authorList>
            <person name="Dodson R.J."/>
            <person name="Durkin A.S."/>
            <person name="Rosovitz M.J."/>
            <person name="Rasko D.A."/>
            <person name="Hoffmaster A."/>
            <person name="Ravel J."/>
            <person name="Sutton G."/>
        </authorList>
    </citation>
    <scope>NUCLEOTIDE SEQUENCE [LARGE SCALE GENOMIC DNA]</scope>
    <source>
        <strain>G9842</strain>
    </source>
</reference>
<feature type="chain" id="PRO_1000141504" description="Large ribosomal subunit protein uL2">
    <location>
        <begin position="1"/>
        <end position="276"/>
    </location>
</feature>
<feature type="region of interest" description="Disordered" evidence="2">
    <location>
        <begin position="1"/>
        <end position="20"/>
    </location>
</feature>
<feature type="region of interest" description="Disordered" evidence="2">
    <location>
        <begin position="219"/>
        <end position="276"/>
    </location>
</feature>
<feature type="compositionally biased region" description="Polar residues" evidence="2">
    <location>
        <begin position="7"/>
        <end position="20"/>
    </location>
</feature>
<name>RL2_BACC2</name>